<organism>
    <name type="scientific">Arabidopsis thaliana</name>
    <name type="common">Mouse-ear cress</name>
    <dbReference type="NCBI Taxonomy" id="3702"/>
    <lineage>
        <taxon>Eukaryota</taxon>
        <taxon>Viridiplantae</taxon>
        <taxon>Streptophyta</taxon>
        <taxon>Embryophyta</taxon>
        <taxon>Tracheophyta</taxon>
        <taxon>Spermatophyta</taxon>
        <taxon>Magnoliopsida</taxon>
        <taxon>eudicotyledons</taxon>
        <taxon>Gunneridae</taxon>
        <taxon>Pentapetalae</taxon>
        <taxon>rosids</taxon>
        <taxon>malvids</taxon>
        <taxon>Brassicales</taxon>
        <taxon>Brassicaceae</taxon>
        <taxon>Camelineae</taxon>
        <taxon>Arabidopsis</taxon>
    </lineage>
</organism>
<feature type="chain" id="PRO_0000409572" description="BTB/POZ domain-containing protein At3g03510">
    <location>
        <begin position="1"/>
        <end position="508"/>
    </location>
</feature>
<feature type="domain" description="BTB">
    <location>
        <begin position="11"/>
        <end position="77"/>
    </location>
</feature>
<feature type="domain" description="NPH3" evidence="3">
    <location>
        <begin position="156"/>
        <end position="414"/>
    </location>
</feature>
<feature type="modified residue" description="Phosphotyrosine" evidence="2">
    <location>
        <position position="355"/>
    </location>
</feature>
<reference key="1">
    <citation type="journal article" date="2000" name="Nature">
        <title>Sequence and analysis of chromosome 3 of the plant Arabidopsis thaliana.</title>
        <authorList>
            <person name="Salanoubat M."/>
            <person name="Lemcke K."/>
            <person name="Rieger M."/>
            <person name="Ansorge W."/>
            <person name="Unseld M."/>
            <person name="Fartmann B."/>
            <person name="Valle G."/>
            <person name="Bloecker H."/>
            <person name="Perez-Alonso M."/>
            <person name="Obermaier B."/>
            <person name="Delseny M."/>
            <person name="Boutry M."/>
            <person name="Grivell L.A."/>
            <person name="Mache R."/>
            <person name="Puigdomenech P."/>
            <person name="De Simone V."/>
            <person name="Choisne N."/>
            <person name="Artiguenave F."/>
            <person name="Robert C."/>
            <person name="Brottier P."/>
            <person name="Wincker P."/>
            <person name="Cattolico L."/>
            <person name="Weissenbach J."/>
            <person name="Saurin W."/>
            <person name="Quetier F."/>
            <person name="Schaefer M."/>
            <person name="Mueller-Auer S."/>
            <person name="Gabel C."/>
            <person name="Fuchs M."/>
            <person name="Benes V."/>
            <person name="Wurmbach E."/>
            <person name="Drzonek H."/>
            <person name="Erfle H."/>
            <person name="Jordan N."/>
            <person name="Bangert S."/>
            <person name="Wiedelmann R."/>
            <person name="Kranz H."/>
            <person name="Voss H."/>
            <person name="Holland R."/>
            <person name="Brandt P."/>
            <person name="Nyakatura G."/>
            <person name="Vezzi A."/>
            <person name="D'Angelo M."/>
            <person name="Pallavicini A."/>
            <person name="Toppo S."/>
            <person name="Simionati B."/>
            <person name="Conrad A."/>
            <person name="Hornischer K."/>
            <person name="Kauer G."/>
            <person name="Loehnert T.-H."/>
            <person name="Nordsiek G."/>
            <person name="Reichelt J."/>
            <person name="Scharfe M."/>
            <person name="Schoen O."/>
            <person name="Bargues M."/>
            <person name="Terol J."/>
            <person name="Climent J."/>
            <person name="Navarro P."/>
            <person name="Collado C."/>
            <person name="Perez-Perez A."/>
            <person name="Ottenwaelder B."/>
            <person name="Duchemin D."/>
            <person name="Cooke R."/>
            <person name="Laudie M."/>
            <person name="Berger-Llauro C."/>
            <person name="Purnelle B."/>
            <person name="Masuy D."/>
            <person name="de Haan M."/>
            <person name="Maarse A.C."/>
            <person name="Alcaraz J.-P."/>
            <person name="Cottet A."/>
            <person name="Casacuberta E."/>
            <person name="Monfort A."/>
            <person name="Argiriou A."/>
            <person name="Flores M."/>
            <person name="Liguori R."/>
            <person name="Vitale D."/>
            <person name="Mannhaupt G."/>
            <person name="Haase D."/>
            <person name="Schoof H."/>
            <person name="Rudd S."/>
            <person name="Zaccaria P."/>
            <person name="Mewes H.-W."/>
            <person name="Mayer K.F.X."/>
            <person name="Kaul S."/>
            <person name="Town C.D."/>
            <person name="Koo H.L."/>
            <person name="Tallon L.J."/>
            <person name="Jenkins J."/>
            <person name="Rooney T."/>
            <person name="Rizzo M."/>
            <person name="Walts A."/>
            <person name="Utterback T."/>
            <person name="Fujii C.Y."/>
            <person name="Shea T.P."/>
            <person name="Creasy T.H."/>
            <person name="Haas B."/>
            <person name="Maiti R."/>
            <person name="Wu D."/>
            <person name="Peterson J."/>
            <person name="Van Aken S."/>
            <person name="Pai G."/>
            <person name="Militscher J."/>
            <person name="Sellers P."/>
            <person name="Gill J.E."/>
            <person name="Feldblyum T.V."/>
            <person name="Preuss D."/>
            <person name="Lin X."/>
            <person name="Nierman W.C."/>
            <person name="Salzberg S.L."/>
            <person name="White O."/>
            <person name="Venter J.C."/>
            <person name="Fraser C.M."/>
            <person name="Kaneko T."/>
            <person name="Nakamura Y."/>
            <person name="Sato S."/>
            <person name="Kato T."/>
            <person name="Asamizu E."/>
            <person name="Sasamoto S."/>
            <person name="Kimura T."/>
            <person name="Idesawa K."/>
            <person name="Kawashima K."/>
            <person name="Kishida Y."/>
            <person name="Kiyokawa C."/>
            <person name="Kohara M."/>
            <person name="Matsumoto M."/>
            <person name="Matsuno A."/>
            <person name="Muraki A."/>
            <person name="Nakayama S."/>
            <person name="Nakazaki N."/>
            <person name="Shinpo S."/>
            <person name="Takeuchi C."/>
            <person name="Wada T."/>
            <person name="Watanabe A."/>
            <person name="Yamada M."/>
            <person name="Yasuda M."/>
            <person name="Tabata S."/>
        </authorList>
    </citation>
    <scope>NUCLEOTIDE SEQUENCE [LARGE SCALE GENOMIC DNA]</scope>
    <source>
        <strain>cv. Columbia</strain>
    </source>
</reference>
<reference key="2">
    <citation type="journal article" date="2017" name="Plant J.">
        <title>Araport11: a complete reannotation of the Arabidopsis thaliana reference genome.</title>
        <authorList>
            <person name="Cheng C.Y."/>
            <person name="Krishnakumar V."/>
            <person name="Chan A.P."/>
            <person name="Thibaud-Nissen F."/>
            <person name="Schobel S."/>
            <person name="Town C.D."/>
        </authorList>
    </citation>
    <scope>GENOME REANNOTATION</scope>
    <source>
        <strain>cv. Columbia</strain>
    </source>
</reference>
<reference key="3">
    <citation type="submission" date="2006-03" db="EMBL/GenBank/DDBJ databases">
        <authorList>
            <person name="Underwood B.A."/>
            <person name="Xiao Y.-L."/>
            <person name="Moskal W.A. Jr."/>
            <person name="Monaghan E.L."/>
            <person name="Wang W."/>
            <person name="Redman J.C."/>
            <person name="Wu H.C."/>
            <person name="Utterback T."/>
            <person name="Town C.D."/>
        </authorList>
    </citation>
    <scope>NUCLEOTIDE SEQUENCE [LARGE SCALE MRNA] OF 54-508</scope>
    <source>
        <strain>cv. Columbia</strain>
    </source>
</reference>
<reference key="4">
    <citation type="journal article" date="2005" name="J. Biol. Chem.">
        <title>Cullins 3a and 3b assemble with members of the broad complex/tramtrack/bric-a-brac (BTB) protein family to form essential ubiquitin-protein ligases (E3s) in Arabidopsis.</title>
        <authorList>
            <person name="Gingerich D.J."/>
            <person name="Gagne J.M."/>
            <person name="Salter D.W."/>
            <person name="Hellmann H."/>
            <person name="Estelle M."/>
            <person name="Ma L."/>
            <person name="Vierstra R.D."/>
        </authorList>
    </citation>
    <scope>DOMAIN BTB</scope>
</reference>
<evidence type="ECO:0000250" key="1"/>
<evidence type="ECO:0000250" key="2">
    <source>
        <dbReference type="UniProtKB" id="Q9FMF5"/>
    </source>
</evidence>
<evidence type="ECO:0000255" key="3">
    <source>
        <dbReference type="PROSITE-ProRule" id="PRU00982"/>
    </source>
</evidence>
<evidence type="ECO:0000269" key="4">
    <source>
    </source>
</evidence>
<evidence type="ECO:0000305" key="5"/>
<comment type="function">
    <text evidence="1">May act as a substrate-specific adapter of an E3 ubiquitin-protein ligase complex (CUL3-RBX1-BTB) which mediates the ubiquitination and subsequent proteasomal degradation of target proteins.</text>
</comment>
<comment type="pathway">
    <text>Protein modification; protein ubiquitination.</text>
</comment>
<comment type="domain">
    <text evidence="4">The BTB/POZ domain mediates the interaction with some component of ubiquitin ligase complexes.</text>
</comment>
<comment type="similarity">
    <text evidence="3">Belongs to the NPH3 family.</text>
</comment>
<comment type="sequence caution" evidence="5">
    <conflict type="erroneous gene model prediction">
        <sequence resource="EMBL-CDS" id="AAF01584"/>
    </conflict>
</comment>
<comment type="sequence caution" evidence="5">
    <conflict type="erroneous gene model prediction">
        <sequence resource="EMBL-CDS" id="AEE73952"/>
    </conflict>
</comment>
<gene>
    <name type="ordered locus">At3g03510</name>
    <name type="ORF">T21P5.7</name>
</gene>
<keyword id="KW-0597">Phosphoprotein</keyword>
<keyword id="KW-1185">Reference proteome</keyword>
<keyword id="KW-0833">Ubl conjugation pathway</keyword>
<proteinExistence type="evidence at transcript level"/>
<dbReference type="EMBL" id="AC009895">
    <property type="protein sequence ID" value="AAF01584.1"/>
    <property type="status" value="ALT_SEQ"/>
    <property type="molecule type" value="Genomic_DNA"/>
</dbReference>
<dbReference type="EMBL" id="CP002686">
    <property type="protein sequence ID" value="AEE73952.1"/>
    <property type="status" value="ALT_SEQ"/>
    <property type="molecule type" value="Genomic_DNA"/>
</dbReference>
<dbReference type="EMBL" id="DQ446632">
    <property type="protein sequence ID" value="ABE65915.1"/>
    <property type="molecule type" value="mRNA"/>
</dbReference>
<dbReference type="RefSeq" id="NP_187001.2">
    <property type="nucleotide sequence ID" value="NM_111222.2"/>
</dbReference>
<dbReference type="FunCoup" id="Q9SRQ5">
    <property type="interactions" value="5"/>
</dbReference>
<dbReference type="PaxDb" id="3702-AT3G03510.1"/>
<dbReference type="ProteomicsDB" id="242582"/>
<dbReference type="GeneID" id="821246"/>
<dbReference type="KEGG" id="ath:AT3G03510"/>
<dbReference type="Araport" id="AT3G03510"/>
<dbReference type="TAIR" id="AT3G03510"/>
<dbReference type="eggNOG" id="ENOG502QQV1">
    <property type="taxonomic scope" value="Eukaryota"/>
</dbReference>
<dbReference type="HOGENOM" id="CLU_005994_6_2_1"/>
<dbReference type="InParanoid" id="Q9SRQ5"/>
<dbReference type="UniPathway" id="UPA00143"/>
<dbReference type="PRO" id="PR:Q9SRQ5"/>
<dbReference type="Proteomes" id="UP000006548">
    <property type="component" value="Chromosome 3"/>
</dbReference>
<dbReference type="ExpressionAtlas" id="Q9SRQ5">
    <property type="expression patterns" value="baseline and differential"/>
</dbReference>
<dbReference type="GO" id="GO:0016567">
    <property type="term" value="P:protein ubiquitination"/>
    <property type="evidence" value="ECO:0007669"/>
    <property type="project" value="UniProtKB-UniPathway"/>
</dbReference>
<dbReference type="CDD" id="cd01165">
    <property type="entry name" value="BTB_POZ"/>
    <property type="match status" value="1"/>
</dbReference>
<dbReference type="Gene3D" id="3.30.710.10">
    <property type="entry name" value="Potassium Channel Kv1.1, Chain A"/>
    <property type="match status" value="1"/>
</dbReference>
<dbReference type="InterPro" id="IPR000210">
    <property type="entry name" value="BTB/POZ_dom"/>
</dbReference>
<dbReference type="InterPro" id="IPR043454">
    <property type="entry name" value="NPH3/RPT2-like"/>
</dbReference>
<dbReference type="InterPro" id="IPR027356">
    <property type="entry name" value="NPH3_dom"/>
</dbReference>
<dbReference type="InterPro" id="IPR011333">
    <property type="entry name" value="SKP1/BTB/POZ_sf"/>
</dbReference>
<dbReference type="PANTHER" id="PTHR32370">
    <property type="entry name" value="OS12G0117600 PROTEIN"/>
    <property type="match status" value="1"/>
</dbReference>
<dbReference type="Pfam" id="PF00651">
    <property type="entry name" value="BTB"/>
    <property type="match status" value="1"/>
</dbReference>
<dbReference type="Pfam" id="PF03000">
    <property type="entry name" value="NPH3"/>
    <property type="match status" value="1"/>
</dbReference>
<dbReference type="SMART" id="SM00225">
    <property type="entry name" value="BTB"/>
    <property type="match status" value="1"/>
</dbReference>
<dbReference type="SUPFAM" id="SSF54695">
    <property type="entry name" value="POZ domain"/>
    <property type="match status" value="1"/>
</dbReference>
<dbReference type="PROSITE" id="PS51649">
    <property type="entry name" value="NPH3"/>
    <property type="match status" value="1"/>
</dbReference>
<protein>
    <recommendedName>
        <fullName>BTB/POZ domain-containing protein At3g03510</fullName>
    </recommendedName>
</protein>
<accession>Q9SRQ5</accession>
<accession>Q1PET5</accession>
<name>Y3351_ARATH</name>
<sequence>MLIVCRNSKSQDLDLYVKGVHFHLNKTLAKRSAKVTTLLESNKLHELRWIIRDMDINPSIFHLVTRFCYGYKIELSADNIVSVLCIAYYLEMSDDHSSNNLLNKAVTFLEQRVLMSWSETVKALCICSDKILDKLANVGLIEVFLDSLIEKALNDTRLLQDLITLPLRLYEPLILEVSKHNVSLENLVASVCNYANRWVFEKDSGDGSVSRNKREGIEAVERLLPHQRGTISSGFLFKSLKESIFLGACSDCRKGFEVRISNQLDMARAKDLQILSPTEDGSYDIELLKTILKSFYSNDSVPDLSRFVSVARMLEEFLLEAAASDAGLRVGTFKELAEIAVAASCDVLSYSDGIYRAIDVYLERHRDLIESEKMEACRFLHCKKLSPEACEHASKNEKLPLRIVMQVLFVSQMQIRDKVAREMKGVVERTENQVDEVESMSKKLLKLEIEPDYMKKRKIENLECVVHCEKKKTSVWREVKRKFGCMTSSTMDACSCHIKKRKTYHSYK</sequence>